<accession>B9M0Y2</accession>
<dbReference type="EMBL" id="CP001390">
    <property type="protein sequence ID" value="ACM20985.1"/>
    <property type="molecule type" value="Genomic_DNA"/>
</dbReference>
<dbReference type="RefSeq" id="WP_012647714.1">
    <property type="nucleotide sequence ID" value="NC_011979.1"/>
</dbReference>
<dbReference type="SMR" id="B9M0Y2"/>
<dbReference type="STRING" id="316067.Geob_2635"/>
<dbReference type="KEGG" id="geo:Geob_2635"/>
<dbReference type="eggNOG" id="COG1219">
    <property type="taxonomic scope" value="Bacteria"/>
</dbReference>
<dbReference type="HOGENOM" id="CLU_014218_8_2_7"/>
<dbReference type="OrthoDB" id="9804062at2"/>
<dbReference type="Proteomes" id="UP000007721">
    <property type="component" value="Chromosome"/>
</dbReference>
<dbReference type="GO" id="GO:0009376">
    <property type="term" value="C:HslUV protease complex"/>
    <property type="evidence" value="ECO:0007669"/>
    <property type="project" value="TreeGrafter"/>
</dbReference>
<dbReference type="GO" id="GO:0005524">
    <property type="term" value="F:ATP binding"/>
    <property type="evidence" value="ECO:0007669"/>
    <property type="project" value="UniProtKB-UniRule"/>
</dbReference>
<dbReference type="GO" id="GO:0016887">
    <property type="term" value="F:ATP hydrolysis activity"/>
    <property type="evidence" value="ECO:0007669"/>
    <property type="project" value="InterPro"/>
</dbReference>
<dbReference type="GO" id="GO:0140662">
    <property type="term" value="F:ATP-dependent protein folding chaperone"/>
    <property type="evidence" value="ECO:0007669"/>
    <property type="project" value="InterPro"/>
</dbReference>
<dbReference type="GO" id="GO:0046983">
    <property type="term" value="F:protein dimerization activity"/>
    <property type="evidence" value="ECO:0007669"/>
    <property type="project" value="InterPro"/>
</dbReference>
<dbReference type="GO" id="GO:0051082">
    <property type="term" value="F:unfolded protein binding"/>
    <property type="evidence" value="ECO:0007669"/>
    <property type="project" value="UniProtKB-UniRule"/>
</dbReference>
<dbReference type="GO" id="GO:0008270">
    <property type="term" value="F:zinc ion binding"/>
    <property type="evidence" value="ECO:0007669"/>
    <property type="project" value="InterPro"/>
</dbReference>
<dbReference type="GO" id="GO:0051301">
    <property type="term" value="P:cell division"/>
    <property type="evidence" value="ECO:0007669"/>
    <property type="project" value="TreeGrafter"/>
</dbReference>
<dbReference type="GO" id="GO:0051603">
    <property type="term" value="P:proteolysis involved in protein catabolic process"/>
    <property type="evidence" value="ECO:0007669"/>
    <property type="project" value="TreeGrafter"/>
</dbReference>
<dbReference type="CDD" id="cd19497">
    <property type="entry name" value="RecA-like_ClpX"/>
    <property type="match status" value="1"/>
</dbReference>
<dbReference type="FunFam" id="1.10.8.60:FF:000002">
    <property type="entry name" value="ATP-dependent Clp protease ATP-binding subunit ClpX"/>
    <property type="match status" value="1"/>
</dbReference>
<dbReference type="FunFam" id="3.40.50.300:FF:000005">
    <property type="entry name" value="ATP-dependent Clp protease ATP-binding subunit ClpX"/>
    <property type="match status" value="1"/>
</dbReference>
<dbReference type="Gene3D" id="1.10.8.60">
    <property type="match status" value="1"/>
</dbReference>
<dbReference type="Gene3D" id="6.20.220.10">
    <property type="entry name" value="ClpX chaperone, C4-type zinc finger domain"/>
    <property type="match status" value="1"/>
</dbReference>
<dbReference type="Gene3D" id="3.40.50.300">
    <property type="entry name" value="P-loop containing nucleotide triphosphate hydrolases"/>
    <property type="match status" value="1"/>
</dbReference>
<dbReference type="HAMAP" id="MF_00175">
    <property type="entry name" value="ClpX"/>
    <property type="match status" value="1"/>
</dbReference>
<dbReference type="InterPro" id="IPR003593">
    <property type="entry name" value="AAA+_ATPase"/>
</dbReference>
<dbReference type="InterPro" id="IPR050052">
    <property type="entry name" value="ATP-dep_Clp_protease_ClpX"/>
</dbReference>
<dbReference type="InterPro" id="IPR003959">
    <property type="entry name" value="ATPase_AAA_core"/>
</dbReference>
<dbReference type="InterPro" id="IPR019489">
    <property type="entry name" value="Clp_ATPase_C"/>
</dbReference>
<dbReference type="InterPro" id="IPR004487">
    <property type="entry name" value="Clp_protease_ATP-bd_su_ClpX"/>
</dbReference>
<dbReference type="InterPro" id="IPR046425">
    <property type="entry name" value="ClpX_bact"/>
</dbReference>
<dbReference type="InterPro" id="IPR027417">
    <property type="entry name" value="P-loop_NTPase"/>
</dbReference>
<dbReference type="InterPro" id="IPR010603">
    <property type="entry name" value="Znf_CppX_C4"/>
</dbReference>
<dbReference type="InterPro" id="IPR038366">
    <property type="entry name" value="Znf_CppX_C4_sf"/>
</dbReference>
<dbReference type="NCBIfam" id="TIGR00382">
    <property type="entry name" value="clpX"/>
    <property type="match status" value="1"/>
</dbReference>
<dbReference type="NCBIfam" id="NF003745">
    <property type="entry name" value="PRK05342.1"/>
    <property type="match status" value="1"/>
</dbReference>
<dbReference type="PANTHER" id="PTHR48102:SF7">
    <property type="entry name" value="ATP-DEPENDENT CLP PROTEASE ATP-BINDING SUBUNIT CLPX-LIKE, MITOCHONDRIAL"/>
    <property type="match status" value="1"/>
</dbReference>
<dbReference type="PANTHER" id="PTHR48102">
    <property type="entry name" value="ATP-DEPENDENT CLP PROTEASE ATP-BINDING SUBUNIT CLPX-LIKE, MITOCHONDRIAL-RELATED"/>
    <property type="match status" value="1"/>
</dbReference>
<dbReference type="Pfam" id="PF07724">
    <property type="entry name" value="AAA_2"/>
    <property type="match status" value="1"/>
</dbReference>
<dbReference type="Pfam" id="PF10431">
    <property type="entry name" value="ClpB_D2-small"/>
    <property type="match status" value="1"/>
</dbReference>
<dbReference type="Pfam" id="PF06689">
    <property type="entry name" value="zf-C4_ClpX"/>
    <property type="match status" value="1"/>
</dbReference>
<dbReference type="SMART" id="SM00382">
    <property type="entry name" value="AAA"/>
    <property type="match status" value="1"/>
</dbReference>
<dbReference type="SMART" id="SM01086">
    <property type="entry name" value="ClpB_D2-small"/>
    <property type="match status" value="1"/>
</dbReference>
<dbReference type="SMART" id="SM00994">
    <property type="entry name" value="zf-C4_ClpX"/>
    <property type="match status" value="1"/>
</dbReference>
<dbReference type="SUPFAM" id="SSF57716">
    <property type="entry name" value="Glucocorticoid receptor-like (DNA-binding domain)"/>
    <property type="match status" value="1"/>
</dbReference>
<dbReference type="SUPFAM" id="SSF52540">
    <property type="entry name" value="P-loop containing nucleoside triphosphate hydrolases"/>
    <property type="match status" value="1"/>
</dbReference>
<dbReference type="PROSITE" id="PS51902">
    <property type="entry name" value="CLPX_ZB"/>
    <property type="match status" value="1"/>
</dbReference>
<protein>
    <recommendedName>
        <fullName evidence="1">ATP-dependent Clp protease ATP-binding subunit ClpX</fullName>
    </recommendedName>
</protein>
<name>CLPX_GEODF</name>
<proteinExistence type="inferred from homology"/>
<organism>
    <name type="scientific">Geotalea daltonii (strain DSM 22248 / JCM 15807 / FRC-32)</name>
    <name type="common">Geobacter daltonii</name>
    <dbReference type="NCBI Taxonomy" id="316067"/>
    <lineage>
        <taxon>Bacteria</taxon>
        <taxon>Pseudomonadati</taxon>
        <taxon>Thermodesulfobacteriota</taxon>
        <taxon>Desulfuromonadia</taxon>
        <taxon>Geobacterales</taxon>
        <taxon>Geobacteraceae</taxon>
        <taxon>Geotalea</taxon>
    </lineage>
</organism>
<gene>
    <name evidence="1" type="primary">clpX</name>
    <name type="ordered locus">Geob_2635</name>
</gene>
<keyword id="KW-0067">ATP-binding</keyword>
<keyword id="KW-0143">Chaperone</keyword>
<keyword id="KW-0479">Metal-binding</keyword>
<keyword id="KW-0547">Nucleotide-binding</keyword>
<keyword id="KW-1185">Reference proteome</keyword>
<keyword id="KW-0862">Zinc</keyword>
<comment type="function">
    <text evidence="1">ATP-dependent specificity component of the Clp protease. It directs the protease to specific substrates. Can perform chaperone functions in the absence of ClpP.</text>
</comment>
<comment type="subunit">
    <text evidence="1">Component of the ClpX-ClpP complex. Forms a hexameric ring that, in the presence of ATP, binds to fourteen ClpP subunits assembled into a disk-like structure with a central cavity, resembling the structure of eukaryotic proteasomes.</text>
</comment>
<comment type="similarity">
    <text evidence="1">Belongs to the ClpX chaperone family.</text>
</comment>
<feature type="chain" id="PRO_1000123836" description="ATP-dependent Clp protease ATP-binding subunit ClpX">
    <location>
        <begin position="1"/>
        <end position="417"/>
    </location>
</feature>
<feature type="domain" description="ClpX-type ZB" evidence="2">
    <location>
        <begin position="1"/>
        <end position="54"/>
    </location>
</feature>
<feature type="binding site" evidence="2">
    <location>
        <position position="13"/>
    </location>
    <ligand>
        <name>Zn(2+)</name>
        <dbReference type="ChEBI" id="CHEBI:29105"/>
    </ligand>
</feature>
<feature type="binding site" evidence="2">
    <location>
        <position position="16"/>
    </location>
    <ligand>
        <name>Zn(2+)</name>
        <dbReference type="ChEBI" id="CHEBI:29105"/>
    </ligand>
</feature>
<feature type="binding site" evidence="2">
    <location>
        <position position="35"/>
    </location>
    <ligand>
        <name>Zn(2+)</name>
        <dbReference type="ChEBI" id="CHEBI:29105"/>
    </ligand>
</feature>
<feature type="binding site" evidence="2">
    <location>
        <position position="38"/>
    </location>
    <ligand>
        <name>Zn(2+)</name>
        <dbReference type="ChEBI" id="CHEBI:29105"/>
    </ligand>
</feature>
<feature type="binding site" evidence="1">
    <location>
        <begin position="119"/>
        <end position="126"/>
    </location>
    <ligand>
        <name>ATP</name>
        <dbReference type="ChEBI" id="CHEBI:30616"/>
    </ligand>
</feature>
<evidence type="ECO:0000255" key="1">
    <source>
        <dbReference type="HAMAP-Rule" id="MF_00175"/>
    </source>
</evidence>
<evidence type="ECO:0000255" key="2">
    <source>
        <dbReference type="PROSITE-ProRule" id="PRU01250"/>
    </source>
</evidence>
<sequence>MSRRDDRSDNLICSFCGKSQEEVKKLIAGPTVYICDECIELCNDIIAEESKLEEATGPDVKKLPKPLEIKDVLDEYVIGQKQAKKVLAVAVYNHYKRIEAMTKPGEVEMQKSNILLLGPTGSGKTLLAQTLARILKVPFAMADATNLTEAGYVGEDVENIILNLLQAADYDVERAQKGIIYIDEIDKIARKSDSPSITRDVSGEGVQQALLKIIEGTVASVPPKGGRKHPQQEFLKVDTTNILFICGGAFAGLENIIQQRIGVKTLGFGADVKKKIEKKAGELLIGVTPEDLLKFGFIPEFVGRLPVLASLTELDEEAMVQILKEPKNALVKQYQKLFDMEHVKLKFTDGSLVAIAREALKRKTGARGLRSILENAMLDIMYEIPSQTMVKEVVISEDVIYNKEKPIIVYESVAESA</sequence>
<reference key="1">
    <citation type="submission" date="2009-01" db="EMBL/GenBank/DDBJ databases">
        <title>Complete sequence of Geobacter sp. FRC-32.</title>
        <authorList>
            <consortium name="US DOE Joint Genome Institute"/>
            <person name="Lucas S."/>
            <person name="Copeland A."/>
            <person name="Lapidus A."/>
            <person name="Glavina del Rio T."/>
            <person name="Dalin E."/>
            <person name="Tice H."/>
            <person name="Bruce D."/>
            <person name="Goodwin L."/>
            <person name="Pitluck S."/>
            <person name="Saunders E."/>
            <person name="Brettin T."/>
            <person name="Detter J.C."/>
            <person name="Han C."/>
            <person name="Larimer F."/>
            <person name="Land M."/>
            <person name="Hauser L."/>
            <person name="Kyrpides N."/>
            <person name="Ovchinnikova G."/>
            <person name="Kostka J."/>
            <person name="Richardson P."/>
        </authorList>
    </citation>
    <scope>NUCLEOTIDE SEQUENCE [LARGE SCALE GENOMIC DNA]</scope>
    <source>
        <strain>DSM 22248 / JCM 15807 / FRC-32</strain>
    </source>
</reference>